<proteinExistence type="inferred from homology"/>
<keyword id="KW-0687">Ribonucleoprotein</keyword>
<keyword id="KW-0689">Ribosomal protein</keyword>
<accession>B8ZKX3</accession>
<comment type="similarity">
    <text evidence="1">Belongs to the bacterial ribosomal protein bS21 family.</text>
</comment>
<sequence>MSKTVVRKNESLDDALRRFKRAVTKAGTLQETRKREFYEKPSVKRKRKSEVARKRKKF</sequence>
<evidence type="ECO:0000255" key="1">
    <source>
        <dbReference type="HAMAP-Rule" id="MF_00358"/>
    </source>
</evidence>
<evidence type="ECO:0000256" key="2">
    <source>
        <dbReference type="SAM" id="MobiDB-lite"/>
    </source>
</evidence>
<evidence type="ECO:0000305" key="3"/>
<feature type="chain" id="PRO_1000133490" description="Small ribosomal subunit protein bS21">
    <location>
        <begin position="1"/>
        <end position="58"/>
    </location>
</feature>
<feature type="region of interest" description="Disordered" evidence="2">
    <location>
        <begin position="39"/>
        <end position="58"/>
    </location>
</feature>
<feature type="compositionally biased region" description="Basic residues" evidence="2">
    <location>
        <begin position="43"/>
        <end position="58"/>
    </location>
</feature>
<dbReference type="EMBL" id="FM211187">
    <property type="protein sequence ID" value="CAR69178.1"/>
    <property type="molecule type" value="Genomic_DNA"/>
</dbReference>
<dbReference type="RefSeq" id="WP_000048055.1">
    <property type="nucleotide sequence ID" value="NC_011900.1"/>
</dbReference>
<dbReference type="SMR" id="B8ZKX3"/>
<dbReference type="GeneID" id="45653328"/>
<dbReference type="KEGG" id="sne:SPN23F13790"/>
<dbReference type="HOGENOM" id="CLU_159258_3_2_9"/>
<dbReference type="GO" id="GO:1990904">
    <property type="term" value="C:ribonucleoprotein complex"/>
    <property type="evidence" value="ECO:0007669"/>
    <property type="project" value="UniProtKB-KW"/>
</dbReference>
<dbReference type="GO" id="GO:0005840">
    <property type="term" value="C:ribosome"/>
    <property type="evidence" value="ECO:0007669"/>
    <property type="project" value="UniProtKB-KW"/>
</dbReference>
<dbReference type="GO" id="GO:0003735">
    <property type="term" value="F:structural constituent of ribosome"/>
    <property type="evidence" value="ECO:0007669"/>
    <property type="project" value="InterPro"/>
</dbReference>
<dbReference type="GO" id="GO:0006412">
    <property type="term" value="P:translation"/>
    <property type="evidence" value="ECO:0007669"/>
    <property type="project" value="UniProtKB-UniRule"/>
</dbReference>
<dbReference type="Gene3D" id="1.20.5.1150">
    <property type="entry name" value="Ribosomal protein S8"/>
    <property type="match status" value="1"/>
</dbReference>
<dbReference type="HAMAP" id="MF_00358">
    <property type="entry name" value="Ribosomal_bS21"/>
    <property type="match status" value="1"/>
</dbReference>
<dbReference type="InterPro" id="IPR001911">
    <property type="entry name" value="Ribosomal_bS21"/>
</dbReference>
<dbReference type="InterPro" id="IPR018278">
    <property type="entry name" value="Ribosomal_bS21_CS"/>
</dbReference>
<dbReference type="InterPro" id="IPR038380">
    <property type="entry name" value="Ribosomal_bS21_sf"/>
</dbReference>
<dbReference type="NCBIfam" id="TIGR00030">
    <property type="entry name" value="S21p"/>
    <property type="match status" value="1"/>
</dbReference>
<dbReference type="PANTHER" id="PTHR21109">
    <property type="entry name" value="MITOCHONDRIAL 28S RIBOSOMAL PROTEIN S21"/>
    <property type="match status" value="1"/>
</dbReference>
<dbReference type="PANTHER" id="PTHR21109:SF22">
    <property type="entry name" value="SMALL RIBOSOMAL SUBUNIT PROTEIN BS21"/>
    <property type="match status" value="1"/>
</dbReference>
<dbReference type="Pfam" id="PF01165">
    <property type="entry name" value="Ribosomal_S21"/>
    <property type="match status" value="1"/>
</dbReference>
<dbReference type="PRINTS" id="PR00976">
    <property type="entry name" value="RIBOSOMALS21"/>
</dbReference>
<dbReference type="PROSITE" id="PS01181">
    <property type="entry name" value="RIBOSOMAL_S21"/>
    <property type="match status" value="1"/>
</dbReference>
<reference key="1">
    <citation type="journal article" date="2009" name="J. Bacteriol.">
        <title>Role of conjugative elements in the evolution of the multidrug-resistant pandemic clone Streptococcus pneumoniae Spain23F ST81.</title>
        <authorList>
            <person name="Croucher N.J."/>
            <person name="Walker D."/>
            <person name="Romero P."/>
            <person name="Lennard N."/>
            <person name="Paterson G.K."/>
            <person name="Bason N.C."/>
            <person name="Mitchell A.M."/>
            <person name="Quail M.A."/>
            <person name="Andrew P.W."/>
            <person name="Parkhill J."/>
            <person name="Bentley S.D."/>
            <person name="Mitchell T.J."/>
        </authorList>
    </citation>
    <scope>NUCLEOTIDE SEQUENCE [LARGE SCALE GENOMIC DNA]</scope>
    <source>
        <strain>ATCC 700669 / Spain 23F-1</strain>
    </source>
</reference>
<name>RS21_STRPJ</name>
<protein>
    <recommendedName>
        <fullName evidence="1">Small ribosomal subunit protein bS21</fullName>
    </recommendedName>
    <alternativeName>
        <fullName evidence="3">30S ribosomal protein S21</fullName>
    </alternativeName>
</protein>
<organism>
    <name type="scientific">Streptococcus pneumoniae (strain ATCC 700669 / Spain 23F-1)</name>
    <dbReference type="NCBI Taxonomy" id="561276"/>
    <lineage>
        <taxon>Bacteria</taxon>
        <taxon>Bacillati</taxon>
        <taxon>Bacillota</taxon>
        <taxon>Bacilli</taxon>
        <taxon>Lactobacillales</taxon>
        <taxon>Streptococcaceae</taxon>
        <taxon>Streptococcus</taxon>
    </lineage>
</organism>
<gene>
    <name evidence="1" type="primary">rpsU</name>
    <name type="ordered locus">SPN23F13790</name>
</gene>